<keyword id="KW-1003">Cell membrane</keyword>
<keyword id="KW-0472">Membrane</keyword>
<keyword id="KW-1185">Reference proteome</keyword>
<keyword id="KW-0812">Transmembrane</keyword>
<keyword id="KW-1133">Transmembrane helix</keyword>
<gene>
    <name type="primary">ywoB</name>
    <name type="ordered locus">BSU36500</name>
</gene>
<comment type="subcellular location">
    <subcellularLocation>
        <location evidence="2">Cell membrane</location>
        <topology evidence="2">Multi-pass membrane protein</topology>
    </subcellularLocation>
</comment>
<dbReference type="EMBL" id="Z82987">
    <property type="protein sequence ID" value="CAB05375.1"/>
    <property type="molecule type" value="Genomic_DNA"/>
</dbReference>
<dbReference type="EMBL" id="AL009126">
    <property type="protein sequence ID" value="CAB15667.1"/>
    <property type="molecule type" value="Genomic_DNA"/>
</dbReference>
<dbReference type="PIR" id="E70064">
    <property type="entry name" value="E70064"/>
</dbReference>
<dbReference type="RefSeq" id="NP_391531.1">
    <property type="nucleotide sequence ID" value="NC_000964.3"/>
</dbReference>
<dbReference type="RefSeq" id="WP_003244424.1">
    <property type="nucleotide sequence ID" value="NZ_OZ025638.1"/>
</dbReference>
<dbReference type="FunCoup" id="P94572">
    <property type="interactions" value="78"/>
</dbReference>
<dbReference type="STRING" id="224308.BSU36500"/>
<dbReference type="PaxDb" id="224308-BSU36500"/>
<dbReference type="EnsemblBacteria" id="CAB15667">
    <property type="protein sequence ID" value="CAB15667"/>
    <property type="gene ID" value="BSU_36500"/>
</dbReference>
<dbReference type="GeneID" id="936938"/>
<dbReference type="KEGG" id="bsu:BSU36500"/>
<dbReference type="PATRIC" id="fig|224308.43.peg.3824"/>
<dbReference type="eggNOG" id="ENOG50310W6">
    <property type="taxonomic scope" value="Bacteria"/>
</dbReference>
<dbReference type="InParanoid" id="P94572"/>
<dbReference type="OrthoDB" id="3686926at2"/>
<dbReference type="BioCyc" id="BSUB:BSU36500-MONOMER"/>
<dbReference type="Proteomes" id="UP000001570">
    <property type="component" value="Chromosome"/>
</dbReference>
<dbReference type="GO" id="GO:0005886">
    <property type="term" value="C:plasma membrane"/>
    <property type="evidence" value="ECO:0007669"/>
    <property type="project" value="UniProtKB-SubCell"/>
</dbReference>
<accession>P94572</accession>
<proteinExistence type="predicted"/>
<protein>
    <recommendedName>
        <fullName>Uncharacterized protein YwoB</fullName>
    </recommendedName>
</protein>
<organism>
    <name type="scientific">Bacillus subtilis (strain 168)</name>
    <dbReference type="NCBI Taxonomy" id="224308"/>
    <lineage>
        <taxon>Bacteria</taxon>
        <taxon>Bacillati</taxon>
        <taxon>Bacillota</taxon>
        <taxon>Bacilli</taxon>
        <taxon>Bacillales</taxon>
        <taxon>Bacillaceae</taxon>
        <taxon>Bacillus</taxon>
    </lineage>
</organism>
<reference key="1">
    <citation type="journal article" date="1997" name="Microbiology">
        <title>The Bacillus subtilis genome from gerBC (311 degrees) to licR (334 degrees).</title>
        <authorList>
            <person name="Presecan E."/>
            <person name="Moszer I."/>
            <person name="Boursier L."/>
            <person name="Cruz Ramos H."/>
            <person name="De La Fuente V."/>
            <person name="Hullo M.-F."/>
            <person name="Lelong C."/>
            <person name="Schleich S."/>
            <person name="Sekowska A."/>
            <person name="Song B.H."/>
            <person name="Villani G."/>
            <person name="Kunst F."/>
            <person name="Danchin A."/>
            <person name="Glaser P."/>
        </authorList>
    </citation>
    <scope>NUCLEOTIDE SEQUENCE [GENOMIC DNA]</scope>
    <source>
        <strain>168</strain>
    </source>
</reference>
<reference key="2">
    <citation type="journal article" date="1997" name="Nature">
        <title>The complete genome sequence of the Gram-positive bacterium Bacillus subtilis.</title>
        <authorList>
            <person name="Kunst F."/>
            <person name="Ogasawara N."/>
            <person name="Moszer I."/>
            <person name="Albertini A.M."/>
            <person name="Alloni G."/>
            <person name="Azevedo V."/>
            <person name="Bertero M.G."/>
            <person name="Bessieres P."/>
            <person name="Bolotin A."/>
            <person name="Borchert S."/>
            <person name="Borriss R."/>
            <person name="Boursier L."/>
            <person name="Brans A."/>
            <person name="Braun M."/>
            <person name="Brignell S.C."/>
            <person name="Bron S."/>
            <person name="Brouillet S."/>
            <person name="Bruschi C.V."/>
            <person name="Caldwell B."/>
            <person name="Capuano V."/>
            <person name="Carter N.M."/>
            <person name="Choi S.-K."/>
            <person name="Codani J.-J."/>
            <person name="Connerton I.F."/>
            <person name="Cummings N.J."/>
            <person name="Daniel R.A."/>
            <person name="Denizot F."/>
            <person name="Devine K.M."/>
            <person name="Duesterhoeft A."/>
            <person name="Ehrlich S.D."/>
            <person name="Emmerson P.T."/>
            <person name="Entian K.-D."/>
            <person name="Errington J."/>
            <person name="Fabret C."/>
            <person name="Ferrari E."/>
            <person name="Foulger D."/>
            <person name="Fritz C."/>
            <person name="Fujita M."/>
            <person name="Fujita Y."/>
            <person name="Fuma S."/>
            <person name="Galizzi A."/>
            <person name="Galleron N."/>
            <person name="Ghim S.-Y."/>
            <person name="Glaser P."/>
            <person name="Goffeau A."/>
            <person name="Golightly E.J."/>
            <person name="Grandi G."/>
            <person name="Guiseppi G."/>
            <person name="Guy B.J."/>
            <person name="Haga K."/>
            <person name="Haiech J."/>
            <person name="Harwood C.R."/>
            <person name="Henaut A."/>
            <person name="Hilbert H."/>
            <person name="Holsappel S."/>
            <person name="Hosono S."/>
            <person name="Hullo M.-F."/>
            <person name="Itaya M."/>
            <person name="Jones L.-M."/>
            <person name="Joris B."/>
            <person name="Karamata D."/>
            <person name="Kasahara Y."/>
            <person name="Klaerr-Blanchard M."/>
            <person name="Klein C."/>
            <person name="Kobayashi Y."/>
            <person name="Koetter P."/>
            <person name="Koningstein G."/>
            <person name="Krogh S."/>
            <person name="Kumano M."/>
            <person name="Kurita K."/>
            <person name="Lapidus A."/>
            <person name="Lardinois S."/>
            <person name="Lauber J."/>
            <person name="Lazarevic V."/>
            <person name="Lee S.-M."/>
            <person name="Levine A."/>
            <person name="Liu H."/>
            <person name="Masuda S."/>
            <person name="Mauel C."/>
            <person name="Medigue C."/>
            <person name="Medina N."/>
            <person name="Mellado R.P."/>
            <person name="Mizuno M."/>
            <person name="Moestl D."/>
            <person name="Nakai S."/>
            <person name="Noback M."/>
            <person name="Noone D."/>
            <person name="O'Reilly M."/>
            <person name="Ogawa K."/>
            <person name="Ogiwara A."/>
            <person name="Oudega B."/>
            <person name="Park S.-H."/>
            <person name="Parro V."/>
            <person name="Pohl T.M."/>
            <person name="Portetelle D."/>
            <person name="Porwollik S."/>
            <person name="Prescott A.M."/>
            <person name="Presecan E."/>
            <person name="Pujic P."/>
            <person name="Purnelle B."/>
            <person name="Rapoport G."/>
            <person name="Rey M."/>
            <person name="Reynolds S."/>
            <person name="Rieger M."/>
            <person name="Rivolta C."/>
            <person name="Rocha E."/>
            <person name="Roche B."/>
            <person name="Rose M."/>
            <person name="Sadaie Y."/>
            <person name="Sato T."/>
            <person name="Scanlan E."/>
            <person name="Schleich S."/>
            <person name="Schroeter R."/>
            <person name="Scoffone F."/>
            <person name="Sekiguchi J."/>
            <person name="Sekowska A."/>
            <person name="Seror S.J."/>
            <person name="Serror P."/>
            <person name="Shin B.-S."/>
            <person name="Soldo B."/>
            <person name="Sorokin A."/>
            <person name="Tacconi E."/>
            <person name="Takagi T."/>
            <person name="Takahashi H."/>
            <person name="Takemaru K."/>
            <person name="Takeuchi M."/>
            <person name="Tamakoshi A."/>
            <person name="Tanaka T."/>
            <person name="Terpstra P."/>
            <person name="Tognoni A."/>
            <person name="Tosato V."/>
            <person name="Uchiyama S."/>
            <person name="Vandenbol M."/>
            <person name="Vannier F."/>
            <person name="Vassarotti A."/>
            <person name="Viari A."/>
            <person name="Wambutt R."/>
            <person name="Wedler E."/>
            <person name="Wedler H."/>
            <person name="Weitzenegger T."/>
            <person name="Winters P."/>
            <person name="Wipat A."/>
            <person name="Yamamoto H."/>
            <person name="Yamane K."/>
            <person name="Yasumoto K."/>
            <person name="Yata K."/>
            <person name="Yoshida K."/>
            <person name="Yoshikawa H.-F."/>
            <person name="Zumstein E."/>
            <person name="Yoshikawa H."/>
            <person name="Danchin A."/>
        </authorList>
    </citation>
    <scope>NUCLEOTIDE SEQUENCE [LARGE SCALE GENOMIC DNA]</scope>
    <source>
        <strain>168</strain>
    </source>
</reference>
<evidence type="ECO:0000255" key="1"/>
<evidence type="ECO:0000305" key="2"/>
<feature type="chain" id="PRO_0000049991" description="Uncharacterized protein YwoB">
    <location>
        <begin position="1"/>
        <end position="154"/>
    </location>
</feature>
<feature type="transmembrane region" description="Helical" evidence="1">
    <location>
        <begin position="20"/>
        <end position="42"/>
    </location>
</feature>
<feature type="transmembrane region" description="Helical" evidence="1">
    <location>
        <begin position="62"/>
        <end position="84"/>
    </location>
</feature>
<feature type="transmembrane region" description="Helical" evidence="1">
    <location>
        <begin position="91"/>
        <end position="109"/>
    </location>
</feature>
<feature type="transmembrane region" description="Helical" evidence="1">
    <location>
        <begin position="113"/>
        <end position="132"/>
    </location>
</feature>
<sequence length="154" mass="17436">MMNKGGRLRKAVRKSIPATFRLFLAFNFFVYGLAKVVIGQFGEVTPEIEAAAGKGFTIAWTFFGYSHVYELFIGFGEILAAVLLLIPRTAALGAVIFMPIIVNIVLINYCFDIGVQDLSTILMVMCLILLWMDRRKFMGIFRQEPIDSRQVMKR</sequence>
<name>YWOB_BACSU</name>